<comment type="function">
    <text evidence="4 5">May regulate the number of excitatory synapses that are formed on hippocampus neurons. Has no effect on inhibitory synapses. Plays a role in glucose homeostasis. Via AMPK signaling pathway, stimulates glucose uptake in adipocytes, myotubes and hepatocytes and enhances insulin-stimulated glucose uptake. In a hepatoma cell line, reduces the expression of gluconeogenic enzymes G6PC1 and PCK1 and hence decreases de novo glucose production.</text>
</comment>
<comment type="subunit">
    <text evidence="4 5 6">Forms homooligomers. Interacts with ADGRB3 (PubMed:21262840). Forms heterooligomers with C1QL2 and C1QL4, when proteins are coexpressed; this interaction does not occur after secretion.</text>
</comment>
<comment type="interaction">
    <interactant intactId="EBI-15907894">
        <id>Q9ESN4</id>
    </interactant>
    <interactant intactId="EBI-15907894">
        <id>Q9ESN4</id>
        <label>C1ql3</label>
    </interactant>
    <organismsDiffer>false</organismsDiffer>
    <experiments>3</experiments>
</comment>
<comment type="interaction">
    <interactant intactId="EBI-15907894">
        <id>Q9ESN4</id>
    </interactant>
    <interactant intactId="EBI-2682765">
        <id>O60242</id>
        <label>ADGRB3</label>
    </interactant>
    <organismsDiffer>true</organismsDiffer>
    <experiments>4</experiments>
</comment>
<comment type="subcellular location">
    <subcellularLocation>
        <location evidence="5">Secreted</location>
    </subcellularLocation>
</comment>
<comment type="tissue specificity">
    <text evidence="5">Highly expressed in brain and white adipose tissue. In gonadal fat pad, expressed at lower levels in adipocytes than in the stromal vascular fraction (VSP), which contains preadipocytes, fibroblasts, endothelial cells and occasional immune cells. Expression exhibits sexually dimorphism, with higher levels in females than in males (at protein level). Tends to be up-regulated in adipose tissue from obese males, but not females. Expressed in glial cells.</text>
</comment>
<comment type="induction">
    <text evidence="5">In adipocytes, up-regulated by rosiglitazone, an insulin-sensitizing drug.</text>
</comment>
<proteinExistence type="evidence at protein level"/>
<accession>Q9ESN4</accession>
<accession>A2AUR9</accession>
<accession>B0LXL6</accession>
<protein>
    <recommendedName>
        <fullName>Complement C1q-like protein 3</fullName>
    </recommendedName>
    <alternativeName>
        <fullName>C1q and tumor necrosis factor-related protein 13</fullName>
        <shortName>C1q/TNF-related protein 13</shortName>
        <shortName>CTRP13</shortName>
    </alternativeName>
    <alternativeName>
        <fullName>Gliacolin</fullName>
    </alternativeName>
</protein>
<feature type="signal peptide" evidence="1">
    <location>
        <begin position="1"/>
        <end position="20"/>
    </location>
</feature>
<feature type="chain" id="PRO_0000003542" description="Complement C1q-like protein 3">
    <location>
        <begin position="21"/>
        <end position="255"/>
    </location>
</feature>
<feature type="domain" description="Collagen-like">
    <location>
        <begin position="61"/>
        <end position="111"/>
    </location>
</feature>
<feature type="domain" description="C1q" evidence="2">
    <location>
        <begin position="122"/>
        <end position="255"/>
    </location>
</feature>
<feature type="region of interest" description="Disordered" evidence="3">
    <location>
        <begin position="39"/>
        <end position="109"/>
    </location>
</feature>
<feature type="compositionally biased region" description="Pro residues" evidence="3">
    <location>
        <begin position="75"/>
        <end position="89"/>
    </location>
</feature>
<feature type="mutagenesis site" description="Does not affect heterooligomerization with C1QL4; when associated with A-32." evidence="5 6">
    <original>C</original>
    <variation>A</variation>
    <location>
        <position position="28"/>
    </location>
</feature>
<feature type="mutagenesis site" description="Does not affect heterooligomerization with C1QL2; when associated with S-32." evidence="5 6">
    <original>C</original>
    <variation>S</variation>
    <location>
        <position position="28"/>
    </location>
</feature>
<feature type="mutagenesis site" description="Does not affect heterooligomerization with C1QL4; when associated with A-28." evidence="5 6">
    <original>C</original>
    <variation>A</variation>
    <location>
        <position position="32"/>
    </location>
</feature>
<feature type="mutagenesis site" description="Does not affect heterooligomerization with C1QL2; when associated with S-28." evidence="5 6">
    <original>C</original>
    <variation>S</variation>
    <location>
        <position position="32"/>
    </location>
</feature>
<feature type="strand" evidence="7">
    <location>
        <begin position="128"/>
        <end position="132"/>
    </location>
</feature>
<feature type="strand" evidence="7">
    <location>
        <begin position="137"/>
        <end position="142"/>
    </location>
</feature>
<feature type="strand" evidence="7">
    <location>
        <begin position="147"/>
        <end position="152"/>
    </location>
</feature>
<feature type="turn" evidence="7">
    <location>
        <begin position="158"/>
        <end position="160"/>
    </location>
</feature>
<feature type="strand" evidence="8">
    <location>
        <begin position="162"/>
        <end position="164"/>
    </location>
</feature>
<feature type="strand" evidence="7">
    <location>
        <begin position="169"/>
        <end position="179"/>
    </location>
</feature>
<feature type="strand" evidence="7">
    <location>
        <begin position="181"/>
        <end position="183"/>
    </location>
</feature>
<feature type="strand" evidence="7">
    <location>
        <begin position="185"/>
        <end position="193"/>
    </location>
</feature>
<feature type="strand" evidence="7">
    <location>
        <begin position="196"/>
        <end position="204"/>
    </location>
</feature>
<feature type="strand" evidence="7">
    <location>
        <begin position="212"/>
        <end position="221"/>
    </location>
</feature>
<feature type="strand" evidence="7">
    <location>
        <begin position="226"/>
        <end position="236"/>
    </location>
</feature>
<feature type="strand" evidence="7">
    <location>
        <begin position="240"/>
        <end position="242"/>
    </location>
</feature>
<feature type="strand" evidence="7">
    <location>
        <begin position="245"/>
        <end position="254"/>
    </location>
</feature>
<organism>
    <name type="scientific">Mus musculus</name>
    <name type="common">Mouse</name>
    <dbReference type="NCBI Taxonomy" id="10090"/>
    <lineage>
        <taxon>Eukaryota</taxon>
        <taxon>Metazoa</taxon>
        <taxon>Chordata</taxon>
        <taxon>Craniata</taxon>
        <taxon>Vertebrata</taxon>
        <taxon>Euteleostomi</taxon>
        <taxon>Mammalia</taxon>
        <taxon>Eutheria</taxon>
        <taxon>Euarchontoglires</taxon>
        <taxon>Glires</taxon>
        <taxon>Rodentia</taxon>
        <taxon>Myomorpha</taxon>
        <taxon>Muroidea</taxon>
        <taxon>Muridae</taxon>
        <taxon>Murinae</taxon>
        <taxon>Mus</taxon>
        <taxon>Mus</taxon>
    </lineage>
</organism>
<reference key="1">
    <citation type="journal article" date="2000" name="J. Biol. Chem.">
        <title>Conformational requirements of collagenous peptides for recognition by the chaperone protein HSP47.</title>
        <authorList>
            <person name="Koide T."/>
            <person name="Aso A."/>
            <person name="Yorihuzi T."/>
            <person name="Nagata K."/>
        </authorList>
    </citation>
    <scope>NUCLEOTIDE SEQUENCE [MRNA]</scope>
</reference>
<reference key="2">
    <citation type="journal article" date="2011" name="J. Biol. Chem.">
        <title>Metabolic regulation by C1q/TNF-related protein-13 (CTRP13): activation OF AMP-activated protein kinase and suppression of fatty acid-induced JNK signaling.</title>
        <authorList>
            <person name="Wei Z."/>
            <person name="Peterson J.M."/>
            <person name="Wong G.W."/>
        </authorList>
    </citation>
    <scope>NUCLEOTIDE SEQUENCE [MRNA]</scope>
    <scope>FUNCTION</scope>
    <scope>HOMOOLIGOMERIZATION</scope>
    <scope>INTERACTION WITH C1QL2</scope>
    <scope>SUBCELLULAR LOCATION</scope>
    <scope>TISSUE SPECIFICITY</scope>
    <scope>INDUCTION</scope>
    <scope>MUTAGENESIS OF CYS-28 AND CYS-32</scope>
    <source>
        <strain>C57BL/6J</strain>
        <tissue>Brain</tissue>
    </source>
</reference>
<reference key="3">
    <citation type="submission" date="2000-07" db="EMBL/GenBank/DDBJ databases">
        <title>Molecular cloning of a new mouse C1q-like gene expressed in glia.</title>
        <authorList>
            <person name="Watanabe Y."/>
            <person name="Yorihuzi T."/>
            <person name="Yamazaki Y."/>
            <person name="Kubota H."/>
            <person name="Hosokawa N."/>
            <person name="Nagata K."/>
        </authorList>
    </citation>
    <scope>NUCLEOTIDE SEQUENCE [GENOMIC DNA]</scope>
    <source>
        <strain>129/Sv</strain>
    </source>
</reference>
<reference key="4">
    <citation type="journal article" date="2009" name="PLoS Biol.">
        <title>Lineage-specific biology revealed by a finished genome assembly of the mouse.</title>
        <authorList>
            <person name="Church D.M."/>
            <person name="Goodstadt L."/>
            <person name="Hillier L.W."/>
            <person name="Zody M.C."/>
            <person name="Goldstein S."/>
            <person name="She X."/>
            <person name="Bult C.J."/>
            <person name="Agarwala R."/>
            <person name="Cherry J.L."/>
            <person name="DiCuccio M."/>
            <person name="Hlavina W."/>
            <person name="Kapustin Y."/>
            <person name="Meric P."/>
            <person name="Maglott D."/>
            <person name="Birtle Z."/>
            <person name="Marques A.C."/>
            <person name="Graves T."/>
            <person name="Zhou S."/>
            <person name="Teague B."/>
            <person name="Potamousis K."/>
            <person name="Churas C."/>
            <person name="Place M."/>
            <person name="Herschleb J."/>
            <person name="Runnheim R."/>
            <person name="Forrest D."/>
            <person name="Amos-Landgraf J."/>
            <person name="Schwartz D.C."/>
            <person name="Cheng Z."/>
            <person name="Lindblad-Toh K."/>
            <person name="Eichler E.E."/>
            <person name="Ponting C.P."/>
        </authorList>
    </citation>
    <scope>NUCLEOTIDE SEQUENCE [LARGE SCALE GENOMIC DNA]</scope>
    <source>
        <strain>C57BL/6J</strain>
    </source>
</reference>
<reference key="5">
    <citation type="submission" date="2005-07" db="EMBL/GenBank/DDBJ databases">
        <authorList>
            <person name="Mural R.J."/>
            <person name="Adams M.D."/>
            <person name="Myers E.W."/>
            <person name="Smith H.O."/>
            <person name="Venter J.C."/>
        </authorList>
    </citation>
    <scope>NUCLEOTIDE SEQUENCE [LARGE SCALE GENOMIC DNA]</scope>
</reference>
<reference key="6">
    <citation type="journal article" date="2004" name="Genome Res.">
        <title>The status, quality, and expansion of the NIH full-length cDNA project: the Mammalian Gene Collection (MGC).</title>
        <authorList>
            <consortium name="The MGC Project Team"/>
        </authorList>
    </citation>
    <scope>NUCLEOTIDE SEQUENCE [LARGE SCALE MRNA]</scope>
    <source>
        <strain>FVB/N</strain>
        <tissue>Kidney</tissue>
    </source>
</reference>
<reference key="7">
    <citation type="journal article" date="2011" name="Proc. Natl. Acad. Sci. U.S.A.">
        <title>The cell-adhesion G protein-coupled receptor BAI3 is a high-affinity receptor for C1q-like proteins.</title>
        <authorList>
            <person name="Bolliger M.F."/>
            <person name="Martinelli D.C."/>
            <person name="Sudhof T.C."/>
        </authorList>
    </citation>
    <scope>FUNCTION</scope>
    <scope>INTERACTION WITH ADGRB3</scope>
</reference>
<reference key="8">
    <citation type="journal article" date="2013" name="J. Biol. Chem.">
        <title>C1q/tumor necrosis factor-related protein 11 (CTRP11), a novel adipose stroma-derived regulator of adipogenesis.</title>
        <authorList>
            <person name="Wei Z."/>
            <person name="Seldin M.M."/>
            <person name="Natarajan N."/>
            <person name="Djemal D.C."/>
            <person name="Peterson J.M."/>
            <person name="Wong G.W."/>
        </authorList>
    </citation>
    <scope>INTERACTION WITH C1QL4</scope>
    <scope>MUTAGENESIS OF CYS-28 AND CYS-32</scope>
    <source>
        <strain>C57BL/6J</strain>
        <tissue>Testis</tissue>
    </source>
</reference>
<name>C1QL3_MOUSE</name>
<evidence type="ECO:0000255" key="1"/>
<evidence type="ECO:0000255" key="2">
    <source>
        <dbReference type="PROSITE-ProRule" id="PRU00368"/>
    </source>
</evidence>
<evidence type="ECO:0000256" key="3">
    <source>
        <dbReference type="SAM" id="MobiDB-lite"/>
    </source>
</evidence>
<evidence type="ECO:0000269" key="4">
    <source>
    </source>
</evidence>
<evidence type="ECO:0000269" key="5">
    <source>
    </source>
</evidence>
<evidence type="ECO:0000269" key="6">
    <source>
    </source>
</evidence>
<evidence type="ECO:0007829" key="7">
    <source>
        <dbReference type="PDB" id="4QQH"/>
    </source>
</evidence>
<evidence type="ECO:0007829" key="8">
    <source>
        <dbReference type="PDB" id="4QQL"/>
    </source>
</evidence>
<dbReference type="EMBL" id="AB044560">
    <property type="protein sequence ID" value="BAB15806.1"/>
    <property type="molecule type" value="mRNA"/>
</dbReference>
<dbReference type="EMBL" id="EU399230">
    <property type="protein sequence ID" value="ABY86415.1"/>
    <property type="molecule type" value="mRNA"/>
</dbReference>
<dbReference type="EMBL" id="AB045983">
    <property type="protein sequence ID" value="BAB59006.1"/>
    <property type="molecule type" value="Genomic_DNA"/>
</dbReference>
<dbReference type="EMBL" id="AL929209">
    <property type="status" value="NOT_ANNOTATED_CDS"/>
    <property type="molecule type" value="Genomic_DNA"/>
</dbReference>
<dbReference type="EMBL" id="CH466542">
    <property type="protein sequence ID" value="EDL08047.1"/>
    <property type="molecule type" value="Genomic_DNA"/>
</dbReference>
<dbReference type="EMBL" id="BC024634">
    <property type="protein sequence ID" value="AAH24634.1"/>
    <property type="molecule type" value="mRNA"/>
</dbReference>
<dbReference type="CCDS" id="CCDS15692.1"/>
<dbReference type="RefSeq" id="NP_694795.1">
    <property type="nucleotide sequence ID" value="NM_153155.3"/>
</dbReference>
<dbReference type="PDB" id="4QQH">
    <property type="method" value="X-ray"/>
    <property type="resolution" value="1.20 A"/>
    <property type="chains" value="A=119-255"/>
</dbReference>
<dbReference type="PDB" id="4QQL">
    <property type="method" value="X-ray"/>
    <property type="resolution" value="2.39 A"/>
    <property type="chains" value="A/B/C/D/E/F/G/H/I=119-255"/>
</dbReference>
<dbReference type="PDB" id="4QQO">
    <property type="method" value="X-ray"/>
    <property type="resolution" value="2.03 A"/>
    <property type="chains" value="A=119-255"/>
</dbReference>
<dbReference type="PDB" id="4QQP">
    <property type="method" value="X-ray"/>
    <property type="resolution" value="1.46 A"/>
    <property type="chains" value="A=119-255"/>
</dbReference>
<dbReference type="PDB" id="5YBZ">
    <property type="method" value="X-ray"/>
    <property type="resolution" value="1.71 A"/>
    <property type="chains" value="A/C/D=125-255"/>
</dbReference>
<dbReference type="PDB" id="8VWY">
    <property type="method" value="EM"/>
    <property type="resolution" value="2.78 A"/>
    <property type="chains" value="E/H/I=122-255"/>
</dbReference>
<dbReference type="PDBsum" id="4QQH"/>
<dbReference type="PDBsum" id="4QQL"/>
<dbReference type="PDBsum" id="4QQO"/>
<dbReference type="PDBsum" id="4QQP"/>
<dbReference type="PDBsum" id="5YBZ"/>
<dbReference type="PDBsum" id="8VWY"/>
<dbReference type="EMDB" id="EMD-43605"/>
<dbReference type="SMR" id="Q9ESN4"/>
<dbReference type="DIP" id="DIP-59699N"/>
<dbReference type="FunCoup" id="Q9ESN4">
    <property type="interactions" value="18"/>
</dbReference>
<dbReference type="IntAct" id="Q9ESN4">
    <property type="interactions" value="1"/>
</dbReference>
<dbReference type="STRING" id="10090.ENSMUSP00000056188"/>
<dbReference type="PhosphoSitePlus" id="Q9ESN4"/>
<dbReference type="PaxDb" id="10090-ENSMUSP00000056188"/>
<dbReference type="PeptideAtlas" id="Q9ESN4"/>
<dbReference type="ProteomicsDB" id="273726"/>
<dbReference type="Antibodypedia" id="56786">
    <property type="antibodies" value="74 antibodies from 20 providers"/>
</dbReference>
<dbReference type="DNASU" id="227580"/>
<dbReference type="Ensembl" id="ENSMUST00000061545.7">
    <property type="protein sequence ID" value="ENSMUSP00000056188.6"/>
    <property type="gene ID" value="ENSMUSG00000049630.7"/>
</dbReference>
<dbReference type="GeneID" id="227580"/>
<dbReference type="KEGG" id="mmu:227580"/>
<dbReference type="UCSC" id="uc008ijv.1">
    <property type="organism name" value="mouse"/>
</dbReference>
<dbReference type="AGR" id="MGI:2387350"/>
<dbReference type="CTD" id="389941"/>
<dbReference type="MGI" id="MGI:2387350">
    <property type="gene designation" value="C1ql3"/>
</dbReference>
<dbReference type="VEuPathDB" id="HostDB:ENSMUSG00000049630"/>
<dbReference type="eggNOG" id="ENOG502QSKV">
    <property type="taxonomic scope" value="Eukaryota"/>
</dbReference>
<dbReference type="GeneTree" id="ENSGT00940000161639"/>
<dbReference type="HOGENOM" id="CLU_001074_3_1_1"/>
<dbReference type="InParanoid" id="Q9ESN4"/>
<dbReference type="OMA" id="GYEMLKF"/>
<dbReference type="OrthoDB" id="10070467at2759"/>
<dbReference type="PhylomeDB" id="Q9ESN4"/>
<dbReference type="TreeFam" id="TF329591"/>
<dbReference type="BioGRID-ORCS" id="227580">
    <property type="hits" value="3 hits in 77 CRISPR screens"/>
</dbReference>
<dbReference type="EvolutionaryTrace" id="Q9ESN4"/>
<dbReference type="PRO" id="PR:Q9ESN4"/>
<dbReference type="Proteomes" id="UP000000589">
    <property type="component" value="Chromosome 2"/>
</dbReference>
<dbReference type="RNAct" id="Q9ESN4">
    <property type="molecule type" value="protein"/>
</dbReference>
<dbReference type="Bgee" id="ENSMUSG00000049630">
    <property type="expression patterns" value="Expressed in dentate gyrus of hippocampal formation granule cell and 90 other cell types or tissues"/>
</dbReference>
<dbReference type="ExpressionAtlas" id="Q9ESN4">
    <property type="expression patterns" value="baseline and differential"/>
</dbReference>
<dbReference type="GO" id="GO:0005581">
    <property type="term" value="C:collagen trimer"/>
    <property type="evidence" value="ECO:0007669"/>
    <property type="project" value="UniProtKB-KW"/>
</dbReference>
<dbReference type="GO" id="GO:0005576">
    <property type="term" value="C:extracellular region"/>
    <property type="evidence" value="ECO:0000314"/>
    <property type="project" value="MGI"/>
</dbReference>
<dbReference type="GO" id="GO:0098978">
    <property type="term" value="C:glutamatergic synapse"/>
    <property type="evidence" value="ECO:0000314"/>
    <property type="project" value="SynGO"/>
</dbReference>
<dbReference type="GO" id="GO:0098686">
    <property type="term" value="C:hippocampal mossy fiber to CA3 synapse"/>
    <property type="evidence" value="ECO:0000314"/>
    <property type="project" value="SynGO"/>
</dbReference>
<dbReference type="GO" id="GO:0043083">
    <property type="term" value="C:synaptic cleft"/>
    <property type="evidence" value="ECO:0000314"/>
    <property type="project" value="SynGO"/>
</dbReference>
<dbReference type="GO" id="GO:0042802">
    <property type="term" value="F:identical protein binding"/>
    <property type="evidence" value="ECO:0000353"/>
    <property type="project" value="IntAct"/>
</dbReference>
<dbReference type="GO" id="GO:0099645">
    <property type="term" value="P:neurotransmitter receptor localization to postsynaptic specialization membrane"/>
    <property type="evidence" value="ECO:0000314"/>
    <property type="project" value="SynGO"/>
</dbReference>
<dbReference type="GO" id="GO:0097107">
    <property type="term" value="P:postsynaptic density assembly"/>
    <property type="evidence" value="ECO:0000314"/>
    <property type="project" value="SynGO"/>
</dbReference>
<dbReference type="GO" id="GO:0050807">
    <property type="term" value="P:regulation of synapse organization"/>
    <property type="evidence" value="ECO:0000314"/>
    <property type="project" value="MGI"/>
</dbReference>
<dbReference type="FunFam" id="2.60.120.40:FF:000001">
    <property type="entry name" value="Complement C1q B chain"/>
    <property type="match status" value="1"/>
</dbReference>
<dbReference type="Gene3D" id="2.60.120.40">
    <property type="match status" value="1"/>
</dbReference>
<dbReference type="InterPro" id="IPR001073">
    <property type="entry name" value="C1q_dom"/>
</dbReference>
<dbReference type="InterPro" id="IPR050822">
    <property type="entry name" value="Cerebellin_Synaptic_Org"/>
</dbReference>
<dbReference type="InterPro" id="IPR008160">
    <property type="entry name" value="Collagen"/>
</dbReference>
<dbReference type="InterPro" id="IPR008983">
    <property type="entry name" value="Tumour_necrosis_fac-like_dom"/>
</dbReference>
<dbReference type="PANTHER" id="PTHR22923">
    <property type="entry name" value="CEREBELLIN-RELATED"/>
    <property type="match status" value="1"/>
</dbReference>
<dbReference type="PANTHER" id="PTHR22923:SF96">
    <property type="entry name" value="COMPLEMENT C1Q-LIKE PROTEIN 3"/>
    <property type="match status" value="1"/>
</dbReference>
<dbReference type="Pfam" id="PF00386">
    <property type="entry name" value="C1q"/>
    <property type="match status" value="1"/>
</dbReference>
<dbReference type="Pfam" id="PF01391">
    <property type="entry name" value="Collagen"/>
    <property type="match status" value="1"/>
</dbReference>
<dbReference type="PRINTS" id="PR00007">
    <property type="entry name" value="COMPLEMNTC1Q"/>
</dbReference>
<dbReference type="SMART" id="SM00110">
    <property type="entry name" value="C1Q"/>
    <property type="match status" value="1"/>
</dbReference>
<dbReference type="SUPFAM" id="SSF49842">
    <property type="entry name" value="TNF-like"/>
    <property type="match status" value="1"/>
</dbReference>
<dbReference type="PROSITE" id="PS50871">
    <property type="entry name" value="C1Q"/>
    <property type="match status" value="1"/>
</dbReference>
<gene>
    <name type="primary">C1ql3</name>
    <name type="synonym">C1ql</name>
    <name type="synonym">Ctrp13</name>
</gene>
<keyword id="KW-0002">3D-structure</keyword>
<keyword id="KW-0176">Collagen</keyword>
<keyword id="KW-1185">Reference proteome</keyword>
<keyword id="KW-0964">Secreted</keyword>
<keyword id="KW-0732">Signal</keyword>
<sequence length="255" mass="26687">MVLLLVILIPVLVSSAGTSAHYEMLGTCRMVCDPYGGTKAPSTAATPDRGLMQSLPTFIQGPKGEAGRPGKAGPRGPPGEPGPPGPVGPPGEKGEPGRQGLPGPPGAPGLNAAGAISAATYSTVPKIAFYAGLKRQHEGYEVLKFDDVVTNLGNHYDPTTGKFTCSIPGIYFFTYHVLMRGGDGTSMWADLCKNNQVRASAIAQDADQNYDYASNSVVLHLEPGDEVYIKLDGGKAHGGNNNKYSTFSGFIIYAD</sequence>